<dbReference type="EMBL" id="CP000425">
    <property type="protein sequence ID" value="ABJ73893.1"/>
    <property type="molecule type" value="Genomic_DNA"/>
</dbReference>
<dbReference type="RefSeq" id="WP_011677206.1">
    <property type="nucleotide sequence ID" value="NC_008527.1"/>
</dbReference>
<dbReference type="SMR" id="Q02VX9"/>
<dbReference type="GeneID" id="61110477"/>
<dbReference type="KEGG" id="llc:LACR_2454"/>
<dbReference type="HOGENOM" id="CLU_047155_0_1_9"/>
<dbReference type="Proteomes" id="UP000000240">
    <property type="component" value="Chromosome"/>
</dbReference>
<dbReference type="GO" id="GO:0005737">
    <property type="term" value="C:cytoplasm"/>
    <property type="evidence" value="ECO:0007669"/>
    <property type="project" value="UniProtKB-SubCell"/>
</dbReference>
<dbReference type="GO" id="GO:0003746">
    <property type="term" value="F:translation elongation factor activity"/>
    <property type="evidence" value="ECO:0007669"/>
    <property type="project" value="UniProtKB-UniRule"/>
</dbReference>
<dbReference type="CDD" id="cd14275">
    <property type="entry name" value="UBA_EF-Ts"/>
    <property type="match status" value="1"/>
</dbReference>
<dbReference type="FunFam" id="1.10.286.20:FF:000004">
    <property type="entry name" value="Elongation factor Ts"/>
    <property type="match status" value="1"/>
</dbReference>
<dbReference type="FunFam" id="1.10.8.10:FF:000001">
    <property type="entry name" value="Elongation factor Ts"/>
    <property type="match status" value="1"/>
</dbReference>
<dbReference type="Gene3D" id="1.10.286.20">
    <property type="match status" value="1"/>
</dbReference>
<dbReference type="Gene3D" id="1.10.8.10">
    <property type="entry name" value="DNA helicase RuvA subunit, C-terminal domain"/>
    <property type="match status" value="1"/>
</dbReference>
<dbReference type="Gene3D" id="3.30.479.20">
    <property type="entry name" value="Elongation factor Ts, dimerisation domain"/>
    <property type="match status" value="2"/>
</dbReference>
<dbReference type="HAMAP" id="MF_00050">
    <property type="entry name" value="EF_Ts"/>
    <property type="match status" value="1"/>
</dbReference>
<dbReference type="InterPro" id="IPR036402">
    <property type="entry name" value="EF-Ts_dimer_sf"/>
</dbReference>
<dbReference type="InterPro" id="IPR001816">
    <property type="entry name" value="Transl_elong_EFTs/EF1B"/>
</dbReference>
<dbReference type="InterPro" id="IPR014039">
    <property type="entry name" value="Transl_elong_EFTs/EF1B_dimer"/>
</dbReference>
<dbReference type="InterPro" id="IPR018101">
    <property type="entry name" value="Transl_elong_Ts_CS"/>
</dbReference>
<dbReference type="InterPro" id="IPR009060">
    <property type="entry name" value="UBA-like_sf"/>
</dbReference>
<dbReference type="NCBIfam" id="TIGR00116">
    <property type="entry name" value="tsf"/>
    <property type="match status" value="1"/>
</dbReference>
<dbReference type="PANTHER" id="PTHR11741">
    <property type="entry name" value="ELONGATION FACTOR TS"/>
    <property type="match status" value="1"/>
</dbReference>
<dbReference type="PANTHER" id="PTHR11741:SF0">
    <property type="entry name" value="ELONGATION FACTOR TS, MITOCHONDRIAL"/>
    <property type="match status" value="1"/>
</dbReference>
<dbReference type="Pfam" id="PF00889">
    <property type="entry name" value="EF_TS"/>
    <property type="match status" value="2"/>
</dbReference>
<dbReference type="SUPFAM" id="SSF54713">
    <property type="entry name" value="Elongation factor Ts (EF-Ts), dimerisation domain"/>
    <property type="match status" value="1"/>
</dbReference>
<dbReference type="SUPFAM" id="SSF46934">
    <property type="entry name" value="UBA-like"/>
    <property type="match status" value="1"/>
</dbReference>
<dbReference type="PROSITE" id="PS01126">
    <property type="entry name" value="EF_TS_1"/>
    <property type="match status" value="1"/>
</dbReference>
<dbReference type="PROSITE" id="PS01127">
    <property type="entry name" value="EF_TS_2"/>
    <property type="match status" value="1"/>
</dbReference>
<sequence>MAVTAAQVKELREKTGAGIMDAKRALVETDGNMEAAAELLREKGIAKAAKKADRVAAEGLTGIAVNGNVAALVELNSETDFVAKNDQFVALVKETAELLAASKPANNEEALAIKTASGVTLEQELVQATATIGEKITFRRFVVIEKTDAQHFGAYQHNGGKIGVISVIEGADETLAKQVSMHIAAMNPTVLSADELDSEFVKAELAQMNHKIDEDNASRVLVNKPELPHHEYGSKSQLTEEVLAAAKASFEEELKAEGKPEKIWDKILPGKMAKFIVDNTKVDQQFALLAQLYIMDDSKTVEAFLESKGAKAIAFTRFEVGEGIEKAETDFAAEVEAAKAGL</sequence>
<protein>
    <recommendedName>
        <fullName evidence="1">Elongation factor Ts</fullName>
        <shortName evidence="1">EF-Ts</shortName>
    </recommendedName>
</protein>
<organism>
    <name type="scientific">Lactococcus lactis subsp. cremoris (strain SK11)</name>
    <dbReference type="NCBI Taxonomy" id="272622"/>
    <lineage>
        <taxon>Bacteria</taxon>
        <taxon>Bacillati</taxon>
        <taxon>Bacillota</taxon>
        <taxon>Bacilli</taxon>
        <taxon>Lactobacillales</taxon>
        <taxon>Streptococcaceae</taxon>
        <taxon>Lactococcus</taxon>
        <taxon>Lactococcus cremoris subsp. cremoris</taxon>
    </lineage>
</organism>
<keyword id="KW-0963">Cytoplasm</keyword>
<keyword id="KW-0251">Elongation factor</keyword>
<keyword id="KW-0648">Protein biosynthesis</keyword>
<comment type="function">
    <text evidence="1">Associates with the EF-Tu.GDP complex and induces the exchange of GDP to GTP. It remains bound to the aminoacyl-tRNA.EF-Tu.GTP complex up to the GTP hydrolysis stage on the ribosome.</text>
</comment>
<comment type="subcellular location">
    <subcellularLocation>
        <location evidence="1">Cytoplasm</location>
    </subcellularLocation>
</comment>
<comment type="similarity">
    <text evidence="1">Belongs to the EF-Ts family.</text>
</comment>
<feature type="chain" id="PRO_1000006116" description="Elongation factor Ts">
    <location>
        <begin position="1"/>
        <end position="342"/>
    </location>
</feature>
<feature type="region of interest" description="Involved in Mg(2+) ion dislocation from EF-Tu" evidence="1">
    <location>
        <begin position="79"/>
        <end position="82"/>
    </location>
</feature>
<name>EFTS_LACLS</name>
<accession>Q02VX9</accession>
<evidence type="ECO:0000255" key="1">
    <source>
        <dbReference type="HAMAP-Rule" id="MF_00050"/>
    </source>
</evidence>
<proteinExistence type="inferred from homology"/>
<gene>
    <name evidence="1" type="primary">tsf</name>
    <name type="ordered locus">LACR_2454</name>
</gene>
<reference key="1">
    <citation type="journal article" date="2006" name="Proc. Natl. Acad. Sci. U.S.A.">
        <title>Comparative genomics of the lactic acid bacteria.</title>
        <authorList>
            <person name="Makarova K.S."/>
            <person name="Slesarev A."/>
            <person name="Wolf Y.I."/>
            <person name="Sorokin A."/>
            <person name="Mirkin B."/>
            <person name="Koonin E.V."/>
            <person name="Pavlov A."/>
            <person name="Pavlova N."/>
            <person name="Karamychev V."/>
            <person name="Polouchine N."/>
            <person name="Shakhova V."/>
            <person name="Grigoriev I."/>
            <person name="Lou Y."/>
            <person name="Rohksar D."/>
            <person name="Lucas S."/>
            <person name="Huang K."/>
            <person name="Goodstein D.M."/>
            <person name="Hawkins T."/>
            <person name="Plengvidhya V."/>
            <person name="Welker D."/>
            <person name="Hughes J."/>
            <person name="Goh Y."/>
            <person name="Benson A."/>
            <person name="Baldwin K."/>
            <person name="Lee J.-H."/>
            <person name="Diaz-Muniz I."/>
            <person name="Dosti B."/>
            <person name="Smeianov V."/>
            <person name="Wechter W."/>
            <person name="Barabote R."/>
            <person name="Lorca G."/>
            <person name="Altermann E."/>
            <person name="Barrangou R."/>
            <person name="Ganesan B."/>
            <person name="Xie Y."/>
            <person name="Rawsthorne H."/>
            <person name="Tamir D."/>
            <person name="Parker C."/>
            <person name="Breidt F."/>
            <person name="Broadbent J.R."/>
            <person name="Hutkins R."/>
            <person name="O'Sullivan D."/>
            <person name="Steele J."/>
            <person name="Unlu G."/>
            <person name="Saier M.H. Jr."/>
            <person name="Klaenhammer T."/>
            <person name="Richardson P."/>
            <person name="Kozyavkin S."/>
            <person name="Weimer B.C."/>
            <person name="Mills D.A."/>
        </authorList>
    </citation>
    <scope>NUCLEOTIDE SEQUENCE [LARGE SCALE GENOMIC DNA]</scope>
    <source>
        <strain>SK11</strain>
    </source>
</reference>